<feature type="chain" id="PRO_1000005513" description="Large ribosomal subunit protein uL10">
    <location>
        <begin position="1"/>
        <end position="182"/>
    </location>
</feature>
<sequence length="182" mass="18776">MSLNLNDKKAVVAEISAKVASAQTIVVAEYRGIQVGHLTQLRAKARDQGVYLRVLKNTLARRAVEGTAFASLASEMTGPLIYSISDDAVAAAKVISDFSKTNDKLVVKAGNYAGKPLDKAAVTALANIPSREVLLAQVLGMMLVPVASFTRGLAALAAKKAEGAEPVAAAAPAAESTEAAAE</sequence>
<evidence type="ECO:0000255" key="1">
    <source>
        <dbReference type="HAMAP-Rule" id="MF_00362"/>
    </source>
</evidence>
<evidence type="ECO:0000305" key="2"/>
<comment type="function">
    <text evidence="1">Forms part of the ribosomal stalk, playing a central role in the interaction of the ribosome with GTP-bound translation factors.</text>
</comment>
<comment type="subunit">
    <text evidence="1">Part of the ribosomal stalk of the 50S ribosomal subunit. The N-terminus interacts with L11 and the large rRNA to form the base of the stalk. The C-terminus forms an elongated spine to which L12 dimers bind in a sequential fashion forming a multimeric L10(L12)X complex.</text>
</comment>
<comment type="similarity">
    <text evidence="1">Belongs to the universal ribosomal protein uL10 family.</text>
</comment>
<accession>A6T3L5</accession>
<keyword id="KW-0687">Ribonucleoprotein</keyword>
<keyword id="KW-0689">Ribosomal protein</keyword>
<keyword id="KW-0694">RNA-binding</keyword>
<keyword id="KW-0699">rRNA-binding</keyword>
<dbReference type="EMBL" id="CP000269">
    <property type="protein sequence ID" value="ABR89189.1"/>
    <property type="molecule type" value="Genomic_DNA"/>
</dbReference>
<dbReference type="RefSeq" id="WP_012081259.1">
    <property type="nucleotide sequence ID" value="NC_009659.1"/>
</dbReference>
<dbReference type="SMR" id="A6T3L5"/>
<dbReference type="STRING" id="375286.mma_3422"/>
<dbReference type="KEGG" id="mms:mma_3422"/>
<dbReference type="eggNOG" id="COG0244">
    <property type="taxonomic scope" value="Bacteria"/>
</dbReference>
<dbReference type="HOGENOM" id="CLU_092227_0_1_4"/>
<dbReference type="OrthoDB" id="9808307at2"/>
<dbReference type="Proteomes" id="UP000006388">
    <property type="component" value="Chromosome"/>
</dbReference>
<dbReference type="GO" id="GO:0015934">
    <property type="term" value="C:large ribosomal subunit"/>
    <property type="evidence" value="ECO:0007669"/>
    <property type="project" value="InterPro"/>
</dbReference>
<dbReference type="GO" id="GO:0070180">
    <property type="term" value="F:large ribosomal subunit rRNA binding"/>
    <property type="evidence" value="ECO:0007669"/>
    <property type="project" value="UniProtKB-UniRule"/>
</dbReference>
<dbReference type="GO" id="GO:0003735">
    <property type="term" value="F:structural constituent of ribosome"/>
    <property type="evidence" value="ECO:0007669"/>
    <property type="project" value="InterPro"/>
</dbReference>
<dbReference type="GO" id="GO:0006412">
    <property type="term" value="P:translation"/>
    <property type="evidence" value="ECO:0007669"/>
    <property type="project" value="UniProtKB-UniRule"/>
</dbReference>
<dbReference type="CDD" id="cd05797">
    <property type="entry name" value="Ribosomal_L10"/>
    <property type="match status" value="1"/>
</dbReference>
<dbReference type="Gene3D" id="3.30.70.1730">
    <property type="match status" value="1"/>
</dbReference>
<dbReference type="Gene3D" id="6.10.250.290">
    <property type="match status" value="1"/>
</dbReference>
<dbReference type="HAMAP" id="MF_00362">
    <property type="entry name" value="Ribosomal_uL10"/>
    <property type="match status" value="1"/>
</dbReference>
<dbReference type="InterPro" id="IPR001790">
    <property type="entry name" value="Ribosomal_uL10"/>
</dbReference>
<dbReference type="InterPro" id="IPR043141">
    <property type="entry name" value="Ribosomal_uL10-like_sf"/>
</dbReference>
<dbReference type="InterPro" id="IPR022973">
    <property type="entry name" value="Ribosomal_uL10_bac"/>
</dbReference>
<dbReference type="InterPro" id="IPR047865">
    <property type="entry name" value="Ribosomal_uL10_bac_type"/>
</dbReference>
<dbReference type="InterPro" id="IPR002363">
    <property type="entry name" value="Ribosomal_uL10_CS_bac"/>
</dbReference>
<dbReference type="NCBIfam" id="NF000955">
    <property type="entry name" value="PRK00099.1-1"/>
    <property type="match status" value="1"/>
</dbReference>
<dbReference type="PANTHER" id="PTHR11560">
    <property type="entry name" value="39S RIBOSOMAL PROTEIN L10, MITOCHONDRIAL"/>
    <property type="match status" value="1"/>
</dbReference>
<dbReference type="Pfam" id="PF00466">
    <property type="entry name" value="Ribosomal_L10"/>
    <property type="match status" value="1"/>
</dbReference>
<dbReference type="SUPFAM" id="SSF160369">
    <property type="entry name" value="Ribosomal protein L10-like"/>
    <property type="match status" value="1"/>
</dbReference>
<dbReference type="PROSITE" id="PS01109">
    <property type="entry name" value="RIBOSOMAL_L10"/>
    <property type="match status" value="1"/>
</dbReference>
<reference key="1">
    <citation type="journal article" date="2007" name="PLoS Genet.">
        <title>Genome analysis of Minibacterium massiliensis highlights the convergent evolution of water-living bacteria.</title>
        <authorList>
            <person name="Audic S."/>
            <person name="Robert C."/>
            <person name="Campagna B."/>
            <person name="Parinello H."/>
            <person name="Claverie J.-M."/>
            <person name="Raoult D."/>
            <person name="Drancourt M."/>
        </authorList>
    </citation>
    <scope>NUCLEOTIDE SEQUENCE [LARGE SCALE GENOMIC DNA]</scope>
    <source>
        <strain>Marseille</strain>
    </source>
</reference>
<organism>
    <name type="scientific">Janthinobacterium sp. (strain Marseille)</name>
    <name type="common">Minibacterium massiliensis</name>
    <dbReference type="NCBI Taxonomy" id="375286"/>
    <lineage>
        <taxon>Bacteria</taxon>
        <taxon>Pseudomonadati</taxon>
        <taxon>Pseudomonadota</taxon>
        <taxon>Betaproteobacteria</taxon>
        <taxon>Burkholderiales</taxon>
        <taxon>Oxalobacteraceae</taxon>
        <taxon>Janthinobacterium</taxon>
    </lineage>
</organism>
<gene>
    <name evidence="1" type="primary">rplJ</name>
    <name type="ordered locus">mma_3422</name>
</gene>
<proteinExistence type="inferred from homology"/>
<protein>
    <recommendedName>
        <fullName evidence="1">Large ribosomal subunit protein uL10</fullName>
    </recommendedName>
    <alternativeName>
        <fullName evidence="2">50S ribosomal protein L10</fullName>
    </alternativeName>
</protein>
<name>RL10_JANMA</name>